<sequence>MAGSLSEIKAKIISTEKTSKITSAMRMVSSAKLVKSEQAARDFQIYASKIRQITTDLLKSELTIGSDNPMLVSRPVKKTGYIVITSDKGLVGGYNSKILKSVMDMITEYHADGDYEIISIGSVGSDFFKARGMNVAFELRGLADQPSFEQVRQIISQSVDMFVNEIFDELYVCYNHHVNSLTSQVRVQQMLPISDLVADEAAEEGVTGFELEPNRHDILDQLLPQFTESLIYGAIIDAKTAEHAAGMTAMQTATDNAKNVINDLTIQYNRARQAAITQEITEIVAGANALE</sequence>
<keyword id="KW-0066">ATP synthesis</keyword>
<keyword id="KW-1003">Cell membrane</keyword>
<keyword id="KW-0139">CF(1)</keyword>
<keyword id="KW-0375">Hydrogen ion transport</keyword>
<keyword id="KW-0406">Ion transport</keyword>
<keyword id="KW-0472">Membrane</keyword>
<keyword id="KW-0813">Transport</keyword>
<proteinExistence type="inferred from homology"/>
<gene>
    <name evidence="1" type="primary">atpG</name>
    <name type="ordered locus">SpyM51228</name>
</gene>
<protein>
    <recommendedName>
        <fullName evidence="1">ATP synthase gamma chain</fullName>
    </recommendedName>
    <alternativeName>
        <fullName evidence="1">ATP synthase F1 sector gamma subunit</fullName>
    </alternativeName>
    <alternativeName>
        <fullName evidence="1">F-ATPase gamma subunit</fullName>
    </alternativeName>
</protein>
<dbReference type="EMBL" id="AM295007">
    <property type="protein sequence ID" value="CAM30552.1"/>
    <property type="molecule type" value="Genomic_DNA"/>
</dbReference>
<dbReference type="RefSeq" id="WP_002985236.1">
    <property type="nucleotide sequence ID" value="NC_009332.1"/>
</dbReference>
<dbReference type="SMR" id="A2RFC3"/>
<dbReference type="KEGG" id="spf:SpyM51228"/>
<dbReference type="HOGENOM" id="CLU_050669_0_1_9"/>
<dbReference type="GO" id="GO:0005886">
    <property type="term" value="C:plasma membrane"/>
    <property type="evidence" value="ECO:0007669"/>
    <property type="project" value="UniProtKB-SubCell"/>
</dbReference>
<dbReference type="GO" id="GO:0045259">
    <property type="term" value="C:proton-transporting ATP synthase complex"/>
    <property type="evidence" value="ECO:0007669"/>
    <property type="project" value="UniProtKB-KW"/>
</dbReference>
<dbReference type="GO" id="GO:0005524">
    <property type="term" value="F:ATP binding"/>
    <property type="evidence" value="ECO:0007669"/>
    <property type="project" value="UniProtKB-UniRule"/>
</dbReference>
<dbReference type="GO" id="GO:0046933">
    <property type="term" value="F:proton-transporting ATP synthase activity, rotational mechanism"/>
    <property type="evidence" value="ECO:0007669"/>
    <property type="project" value="UniProtKB-UniRule"/>
</dbReference>
<dbReference type="GO" id="GO:0042777">
    <property type="term" value="P:proton motive force-driven plasma membrane ATP synthesis"/>
    <property type="evidence" value="ECO:0007669"/>
    <property type="project" value="UniProtKB-UniRule"/>
</dbReference>
<dbReference type="CDD" id="cd12151">
    <property type="entry name" value="F1-ATPase_gamma"/>
    <property type="match status" value="1"/>
</dbReference>
<dbReference type="FunFam" id="3.40.1380.10:FF:000002">
    <property type="entry name" value="ATP synthase gamma chain"/>
    <property type="match status" value="1"/>
</dbReference>
<dbReference type="Gene3D" id="3.40.1380.10">
    <property type="match status" value="1"/>
</dbReference>
<dbReference type="Gene3D" id="1.10.287.80">
    <property type="entry name" value="ATP synthase, gamma subunit, helix hairpin domain"/>
    <property type="match status" value="1"/>
</dbReference>
<dbReference type="HAMAP" id="MF_00815">
    <property type="entry name" value="ATP_synth_gamma_bact"/>
    <property type="match status" value="1"/>
</dbReference>
<dbReference type="InterPro" id="IPR035968">
    <property type="entry name" value="ATP_synth_F1_ATPase_gsu"/>
</dbReference>
<dbReference type="InterPro" id="IPR000131">
    <property type="entry name" value="ATP_synth_F1_gsu"/>
</dbReference>
<dbReference type="InterPro" id="IPR023632">
    <property type="entry name" value="ATP_synth_F1_gsu_CS"/>
</dbReference>
<dbReference type="NCBIfam" id="TIGR01146">
    <property type="entry name" value="ATPsyn_F1gamma"/>
    <property type="match status" value="1"/>
</dbReference>
<dbReference type="NCBIfam" id="NF004147">
    <property type="entry name" value="PRK05621.2-1"/>
    <property type="match status" value="1"/>
</dbReference>
<dbReference type="PANTHER" id="PTHR11693">
    <property type="entry name" value="ATP SYNTHASE GAMMA CHAIN"/>
    <property type="match status" value="1"/>
</dbReference>
<dbReference type="PANTHER" id="PTHR11693:SF22">
    <property type="entry name" value="ATP SYNTHASE SUBUNIT GAMMA, MITOCHONDRIAL"/>
    <property type="match status" value="1"/>
</dbReference>
<dbReference type="Pfam" id="PF00231">
    <property type="entry name" value="ATP-synt"/>
    <property type="match status" value="1"/>
</dbReference>
<dbReference type="PRINTS" id="PR00126">
    <property type="entry name" value="ATPASEGAMMA"/>
</dbReference>
<dbReference type="SUPFAM" id="SSF52943">
    <property type="entry name" value="ATP synthase (F1-ATPase), gamma subunit"/>
    <property type="match status" value="1"/>
</dbReference>
<dbReference type="PROSITE" id="PS00153">
    <property type="entry name" value="ATPASE_GAMMA"/>
    <property type="match status" value="1"/>
</dbReference>
<reference key="1">
    <citation type="journal article" date="2007" name="J. Bacteriol.">
        <title>Complete genome of acute rheumatic fever-associated serotype M5 Streptococcus pyogenes strain Manfredo.</title>
        <authorList>
            <person name="Holden M.T.G."/>
            <person name="Scott A."/>
            <person name="Cherevach I."/>
            <person name="Chillingworth T."/>
            <person name="Churcher C."/>
            <person name="Cronin A."/>
            <person name="Dowd L."/>
            <person name="Feltwell T."/>
            <person name="Hamlin N."/>
            <person name="Holroyd S."/>
            <person name="Jagels K."/>
            <person name="Moule S."/>
            <person name="Mungall K."/>
            <person name="Quail M.A."/>
            <person name="Price C."/>
            <person name="Rabbinowitsch E."/>
            <person name="Sharp S."/>
            <person name="Skelton J."/>
            <person name="Whitehead S."/>
            <person name="Barrell B.G."/>
            <person name="Kehoe M."/>
            <person name="Parkhill J."/>
        </authorList>
    </citation>
    <scope>NUCLEOTIDE SEQUENCE [LARGE SCALE GENOMIC DNA]</scope>
    <source>
        <strain>Manfredo</strain>
    </source>
</reference>
<accession>A2RFC3</accession>
<feature type="chain" id="PRO_1000053353" description="ATP synthase gamma chain">
    <location>
        <begin position="1"/>
        <end position="291"/>
    </location>
</feature>
<name>ATPG_STRPG</name>
<evidence type="ECO:0000255" key="1">
    <source>
        <dbReference type="HAMAP-Rule" id="MF_00815"/>
    </source>
</evidence>
<organism>
    <name type="scientific">Streptococcus pyogenes serotype M5 (strain Manfredo)</name>
    <dbReference type="NCBI Taxonomy" id="160491"/>
    <lineage>
        <taxon>Bacteria</taxon>
        <taxon>Bacillati</taxon>
        <taxon>Bacillota</taxon>
        <taxon>Bacilli</taxon>
        <taxon>Lactobacillales</taxon>
        <taxon>Streptococcaceae</taxon>
        <taxon>Streptococcus</taxon>
    </lineage>
</organism>
<comment type="function">
    <text evidence="1">Produces ATP from ADP in the presence of a proton gradient across the membrane. The gamma chain is believed to be important in regulating ATPase activity and the flow of protons through the CF(0) complex.</text>
</comment>
<comment type="subunit">
    <text evidence="1">F-type ATPases have 2 components, CF(1) - the catalytic core - and CF(0) - the membrane proton channel. CF(1) has five subunits: alpha(3), beta(3), gamma(1), delta(1), epsilon(1). CF(0) has three main subunits: a, b and c.</text>
</comment>
<comment type="subcellular location">
    <subcellularLocation>
        <location evidence="1">Cell membrane</location>
        <topology evidence="1">Peripheral membrane protein</topology>
    </subcellularLocation>
</comment>
<comment type="similarity">
    <text evidence="1">Belongs to the ATPase gamma chain family.</text>
</comment>